<protein>
    <recommendedName>
        <fullName evidence="1">Shikimate kinase</fullName>
        <shortName evidence="1">SK</shortName>
        <ecNumber evidence="1">2.7.1.71</ecNumber>
    </recommendedName>
</protein>
<dbReference type="EC" id="2.7.1.71" evidence="1"/>
<dbReference type="EMBL" id="CP000253">
    <property type="protein sequence ID" value="ABD30712.1"/>
    <property type="molecule type" value="Genomic_DNA"/>
</dbReference>
<dbReference type="RefSeq" id="WP_001015117.1">
    <property type="nucleotide sequence ID" value="NZ_LS483365.1"/>
</dbReference>
<dbReference type="RefSeq" id="YP_500148.1">
    <property type="nucleotide sequence ID" value="NC_007795.1"/>
</dbReference>
<dbReference type="SMR" id="Q2FY32"/>
<dbReference type="STRING" id="93061.SAOUHSC_01635"/>
<dbReference type="PaxDb" id="1280-SAXN108_1561"/>
<dbReference type="GeneID" id="3919972"/>
<dbReference type="KEGG" id="sao:SAOUHSC_01635"/>
<dbReference type="PATRIC" id="fig|93061.5.peg.1488"/>
<dbReference type="eggNOG" id="COG0703">
    <property type="taxonomic scope" value="Bacteria"/>
</dbReference>
<dbReference type="HOGENOM" id="CLU_057607_4_3_9"/>
<dbReference type="OrthoDB" id="9800332at2"/>
<dbReference type="UniPathway" id="UPA00053">
    <property type="reaction ID" value="UER00088"/>
</dbReference>
<dbReference type="PRO" id="PR:Q2FY32"/>
<dbReference type="Proteomes" id="UP000008816">
    <property type="component" value="Chromosome"/>
</dbReference>
<dbReference type="GO" id="GO:0005829">
    <property type="term" value="C:cytosol"/>
    <property type="evidence" value="ECO:0000318"/>
    <property type="project" value="GO_Central"/>
</dbReference>
<dbReference type="GO" id="GO:0005524">
    <property type="term" value="F:ATP binding"/>
    <property type="evidence" value="ECO:0007669"/>
    <property type="project" value="UniProtKB-UniRule"/>
</dbReference>
<dbReference type="GO" id="GO:0000287">
    <property type="term" value="F:magnesium ion binding"/>
    <property type="evidence" value="ECO:0007669"/>
    <property type="project" value="UniProtKB-UniRule"/>
</dbReference>
<dbReference type="GO" id="GO:0004765">
    <property type="term" value="F:shikimate kinase activity"/>
    <property type="evidence" value="ECO:0000318"/>
    <property type="project" value="GO_Central"/>
</dbReference>
<dbReference type="GO" id="GO:0008652">
    <property type="term" value="P:amino acid biosynthetic process"/>
    <property type="evidence" value="ECO:0007669"/>
    <property type="project" value="UniProtKB-KW"/>
</dbReference>
<dbReference type="GO" id="GO:0009073">
    <property type="term" value="P:aromatic amino acid family biosynthetic process"/>
    <property type="evidence" value="ECO:0007669"/>
    <property type="project" value="UniProtKB-KW"/>
</dbReference>
<dbReference type="GO" id="GO:0009423">
    <property type="term" value="P:chorismate biosynthetic process"/>
    <property type="evidence" value="ECO:0007669"/>
    <property type="project" value="UniProtKB-UniRule"/>
</dbReference>
<dbReference type="CDD" id="cd00464">
    <property type="entry name" value="SK"/>
    <property type="match status" value="1"/>
</dbReference>
<dbReference type="FunFam" id="3.40.50.300:FF:001734">
    <property type="entry name" value="Shikimate kinase"/>
    <property type="match status" value="1"/>
</dbReference>
<dbReference type="Gene3D" id="3.40.50.300">
    <property type="entry name" value="P-loop containing nucleotide triphosphate hydrolases"/>
    <property type="match status" value="1"/>
</dbReference>
<dbReference type="HAMAP" id="MF_00109">
    <property type="entry name" value="Shikimate_kinase"/>
    <property type="match status" value="1"/>
</dbReference>
<dbReference type="InterPro" id="IPR027417">
    <property type="entry name" value="P-loop_NTPase"/>
</dbReference>
<dbReference type="InterPro" id="IPR031322">
    <property type="entry name" value="Shikimate/glucono_kinase"/>
</dbReference>
<dbReference type="InterPro" id="IPR000623">
    <property type="entry name" value="Shikimate_kinase/TSH1"/>
</dbReference>
<dbReference type="InterPro" id="IPR023000">
    <property type="entry name" value="Shikimate_kinase_CS"/>
</dbReference>
<dbReference type="PANTHER" id="PTHR21087">
    <property type="entry name" value="SHIKIMATE KINASE"/>
    <property type="match status" value="1"/>
</dbReference>
<dbReference type="PANTHER" id="PTHR21087:SF16">
    <property type="entry name" value="SHIKIMATE KINASE 1, CHLOROPLASTIC"/>
    <property type="match status" value="1"/>
</dbReference>
<dbReference type="Pfam" id="PF01202">
    <property type="entry name" value="SKI"/>
    <property type="match status" value="1"/>
</dbReference>
<dbReference type="PRINTS" id="PR01100">
    <property type="entry name" value="SHIKIMTKNASE"/>
</dbReference>
<dbReference type="SUPFAM" id="SSF52540">
    <property type="entry name" value="P-loop containing nucleoside triphosphate hydrolases"/>
    <property type="match status" value="1"/>
</dbReference>
<dbReference type="PROSITE" id="PS01128">
    <property type="entry name" value="SHIKIMATE_KINASE"/>
    <property type="match status" value="1"/>
</dbReference>
<sequence>MNHDKSPIILIGFMGTGKSTIGKYVADEQNLSFIDIDSYIEEKYKLTIPEIFCKHGEQYFRNLEFTCLQECINTADIIATGGGIIESEEAFNFLKNQKNIIWLDCNIDIIYSRINDDPHRPNANNKTIKQLNDLYCSRNLRYNEIAFKKFDSHLLSISEIYYELLNLIKASDQY</sequence>
<gene>
    <name evidence="1" type="primary">aroK</name>
    <name type="ordered locus">SAOUHSC_01635</name>
</gene>
<name>AROK_STAA8</name>
<comment type="function">
    <text evidence="1">Catalyzes the specific phosphorylation of the 3-hydroxyl group of shikimic acid using ATP as a cosubstrate.</text>
</comment>
<comment type="catalytic activity">
    <reaction evidence="1">
        <text>shikimate + ATP = 3-phosphoshikimate + ADP + H(+)</text>
        <dbReference type="Rhea" id="RHEA:13121"/>
        <dbReference type="ChEBI" id="CHEBI:15378"/>
        <dbReference type="ChEBI" id="CHEBI:30616"/>
        <dbReference type="ChEBI" id="CHEBI:36208"/>
        <dbReference type="ChEBI" id="CHEBI:145989"/>
        <dbReference type="ChEBI" id="CHEBI:456216"/>
        <dbReference type="EC" id="2.7.1.71"/>
    </reaction>
</comment>
<comment type="cofactor">
    <cofactor evidence="1">
        <name>Mg(2+)</name>
        <dbReference type="ChEBI" id="CHEBI:18420"/>
    </cofactor>
    <text evidence="1">Binds 1 Mg(2+) ion per subunit.</text>
</comment>
<comment type="pathway">
    <text evidence="1">Metabolic intermediate biosynthesis; chorismate biosynthesis; chorismate from D-erythrose 4-phosphate and phosphoenolpyruvate: step 5/7.</text>
</comment>
<comment type="subunit">
    <text evidence="1">Monomer.</text>
</comment>
<comment type="subcellular location">
    <subcellularLocation>
        <location evidence="1">Cytoplasm</location>
    </subcellularLocation>
</comment>
<comment type="similarity">
    <text evidence="1">Belongs to the shikimate kinase family.</text>
</comment>
<evidence type="ECO:0000255" key="1">
    <source>
        <dbReference type="HAMAP-Rule" id="MF_00109"/>
    </source>
</evidence>
<proteinExistence type="inferred from homology"/>
<feature type="chain" id="PRO_1000023004" description="Shikimate kinase">
    <location>
        <begin position="1"/>
        <end position="174"/>
    </location>
</feature>
<feature type="binding site" evidence="1">
    <location>
        <begin position="15"/>
        <end position="20"/>
    </location>
    <ligand>
        <name>ATP</name>
        <dbReference type="ChEBI" id="CHEBI:30616"/>
    </ligand>
</feature>
<feature type="binding site" evidence="1">
    <location>
        <position position="19"/>
    </location>
    <ligand>
        <name>Mg(2+)</name>
        <dbReference type="ChEBI" id="CHEBI:18420"/>
    </ligand>
</feature>
<feature type="binding site" evidence="1">
    <location>
        <position position="37"/>
    </location>
    <ligand>
        <name>substrate</name>
    </ligand>
</feature>
<feature type="binding site" evidence="1">
    <location>
        <position position="61"/>
    </location>
    <ligand>
        <name>substrate</name>
    </ligand>
</feature>
<feature type="binding site" evidence="1">
    <location>
        <position position="82"/>
    </location>
    <ligand>
        <name>substrate</name>
    </ligand>
</feature>
<feature type="binding site" evidence="1">
    <location>
        <position position="120"/>
    </location>
    <ligand>
        <name>ATP</name>
        <dbReference type="ChEBI" id="CHEBI:30616"/>
    </ligand>
</feature>
<feature type="binding site" evidence="1">
    <location>
        <position position="138"/>
    </location>
    <ligand>
        <name>substrate</name>
    </ligand>
</feature>
<keyword id="KW-0028">Amino-acid biosynthesis</keyword>
<keyword id="KW-0057">Aromatic amino acid biosynthesis</keyword>
<keyword id="KW-0067">ATP-binding</keyword>
<keyword id="KW-0963">Cytoplasm</keyword>
<keyword id="KW-0418">Kinase</keyword>
<keyword id="KW-0460">Magnesium</keyword>
<keyword id="KW-0479">Metal-binding</keyword>
<keyword id="KW-0547">Nucleotide-binding</keyword>
<keyword id="KW-1185">Reference proteome</keyword>
<keyword id="KW-0808">Transferase</keyword>
<reference key="1">
    <citation type="book" date="2006" name="Gram positive pathogens, 2nd edition">
        <title>The Staphylococcus aureus NCTC 8325 genome.</title>
        <editorList>
            <person name="Fischetti V."/>
            <person name="Novick R."/>
            <person name="Ferretti J."/>
            <person name="Portnoy D."/>
            <person name="Rood J."/>
        </editorList>
        <authorList>
            <person name="Gillaspy A.F."/>
            <person name="Worrell V."/>
            <person name="Orvis J."/>
            <person name="Roe B.A."/>
            <person name="Dyer D.W."/>
            <person name="Iandolo J.J."/>
        </authorList>
    </citation>
    <scope>NUCLEOTIDE SEQUENCE [LARGE SCALE GENOMIC DNA]</scope>
    <source>
        <strain>NCTC 8325 / PS 47</strain>
    </source>
</reference>
<accession>Q2FY32</accession>
<organism>
    <name type="scientific">Staphylococcus aureus (strain NCTC 8325 / PS 47)</name>
    <dbReference type="NCBI Taxonomy" id="93061"/>
    <lineage>
        <taxon>Bacteria</taxon>
        <taxon>Bacillati</taxon>
        <taxon>Bacillota</taxon>
        <taxon>Bacilli</taxon>
        <taxon>Bacillales</taxon>
        <taxon>Staphylococcaceae</taxon>
        <taxon>Staphylococcus</taxon>
    </lineage>
</organism>